<accession>A8YUR4</accession>
<reference key="1">
    <citation type="journal article" date="2008" name="J. Bacteriol.">
        <title>Genome sequence of Lactobacillus helveticus: an organism distinguished by selective gene loss and IS element expansion.</title>
        <authorList>
            <person name="Callanan M."/>
            <person name="Kaleta P."/>
            <person name="O'Callaghan J."/>
            <person name="O'Sullivan O."/>
            <person name="Jordan K."/>
            <person name="McAuliffe O."/>
            <person name="Sangrador-Vegas A."/>
            <person name="Slattery L."/>
            <person name="Fitzgerald G.F."/>
            <person name="Beresford T."/>
            <person name="Ross R.P."/>
        </authorList>
    </citation>
    <scope>NUCLEOTIDE SEQUENCE [LARGE SCALE GENOMIC DNA]</scope>
    <source>
        <strain>DPC 4571</strain>
    </source>
</reference>
<sequence length="164" mass="18290">MTIALFPGSFDPITNGHIETAKKAAEIFEKVYLVAMTNTSKHYLFSPGERADFARDALKDVANIEVLEKPDEITVDLAHELNAKAIVRGVRNSADFRYEQEIAGINKRLAPDINTILLFSSPENSFVASSMIKELAKFDKDVSQFLPEKAAKALRRKLGNEYAE</sequence>
<protein>
    <recommendedName>
        <fullName evidence="1">Phosphopantetheine adenylyltransferase</fullName>
        <ecNumber evidence="1">2.7.7.3</ecNumber>
    </recommendedName>
    <alternativeName>
        <fullName evidence="1">Dephospho-CoA pyrophosphorylase</fullName>
    </alternativeName>
    <alternativeName>
        <fullName evidence="1">Pantetheine-phosphate adenylyltransferase</fullName>
        <shortName evidence="1">PPAT</shortName>
    </alternativeName>
</protein>
<proteinExistence type="inferred from homology"/>
<evidence type="ECO:0000255" key="1">
    <source>
        <dbReference type="HAMAP-Rule" id="MF_00151"/>
    </source>
</evidence>
<name>COAD_LACH4</name>
<dbReference type="EC" id="2.7.7.3" evidence="1"/>
<dbReference type="EMBL" id="CP000517">
    <property type="protein sequence ID" value="ABX27002.1"/>
    <property type="molecule type" value="Genomic_DNA"/>
</dbReference>
<dbReference type="RefSeq" id="WP_003627939.1">
    <property type="nucleotide sequence ID" value="NC_010080.1"/>
</dbReference>
<dbReference type="SMR" id="A8YUR4"/>
<dbReference type="GeneID" id="83726157"/>
<dbReference type="KEGG" id="lhe:lhv_0886"/>
<dbReference type="eggNOG" id="COG0669">
    <property type="taxonomic scope" value="Bacteria"/>
</dbReference>
<dbReference type="HOGENOM" id="CLU_100149_0_1_9"/>
<dbReference type="UniPathway" id="UPA00241">
    <property type="reaction ID" value="UER00355"/>
</dbReference>
<dbReference type="Proteomes" id="UP000000790">
    <property type="component" value="Chromosome"/>
</dbReference>
<dbReference type="GO" id="GO:0005737">
    <property type="term" value="C:cytoplasm"/>
    <property type="evidence" value="ECO:0007669"/>
    <property type="project" value="UniProtKB-SubCell"/>
</dbReference>
<dbReference type="GO" id="GO:0005524">
    <property type="term" value="F:ATP binding"/>
    <property type="evidence" value="ECO:0007669"/>
    <property type="project" value="UniProtKB-KW"/>
</dbReference>
<dbReference type="GO" id="GO:0004595">
    <property type="term" value="F:pantetheine-phosphate adenylyltransferase activity"/>
    <property type="evidence" value="ECO:0007669"/>
    <property type="project" value="UniProtKB-UniRule"/>
</dbReference>
<dbReference type="GO" id="GO:0015937">
    <property type="term" value="P:coenzyme A biosynthetic process"/>
    <property type="evidence" value="ECO:0007669"/>
    <property type="project" value="UniProtKB-UniRule"/>
</dbReference>
<dbReference type="CDD" id="cd02163">
    <property type="entry name" value="PPAT"/>
    <property type="match status" value="1"/>
</dbReference>
<dbReference type="Gene3D" id="3.40.50.620">
    <property type="entry name" value="HUPs"/>
    <property type="match status" value="1"/>
</dbReference>
<dbReference type="HAMAP" id="MF_00151">
    <property type="entry name" value="PPAT_bact"/>
    <property type="match status" value="1"/>
</dbReference>
<dbReference type="InterPro" id="IPR004821">
    <property type="entry name" value="Cyt_trans-like"/>
</dbReference>
<dbReference type="InterPro" id="IPR001980">
    <property type="entry name" value="PPAT"/>
</dbReference>
<dbReference type="InterPro" id="IPR014729">
    <property type="entry name" value="Rossmann-like_a/b/a_fold"/>
</dbReference>
<dbReference type="NCBIfam" id="TIGR01510">
    <property type="entry name" value="coaD_prev_kdtB"/>
    <property type="match status" value="1"/>
</dbReference>
<dbReference type="NCBIfam" id="TIGR00125">
    <property type="entry name" value="cyt_tran_rel"/>
    <property type="match status" value="1"/>
</dbReference>
<dbReference type="PANTHER" id="PTHR21342">
    <property type="entry name" value="PHOSPHOPANTETHEINE ADENYLYLTRANSFERASE"/>
    <property type="match status" value="1"/>
</dbReference>
<dbReference type="PANTHER" id="PTHR21342:SF1">
    <property type="entry name" value="PHOSPHOPANTETHEINE ADENYLYLTRANSFERASE"/>
    <property type="match status" value="1"/>
</dbReference>
<dbReference type="Pfam" id="PF01467">
    <property type="entry name" value="CTP_transf_like"/>
    <property type="match status" value="1"/>
</dbReference>
<dbReference type="PRINTS" id="PR01020">
    <property type="entry name" value="LPSBIOSNTHSS"/>
</dbReference>
<dbReference type="SUPFAM" id="SSF52374">
    <property type="entry name" value="Nucleotidylyl transferase"/>
    <property type="match status" value="1"/>
</dbReference>
<comment type="function">
    <text evidence="1">Reversibly transfers an adenylyl group from ATP to 4'-phosphopantetheine, yielding dephospho-CoA (dPCoA) and pyrophosphate.</text>
</comment>
<comment type="catalytic activity">
    <reaction evidence="1">
        <text>(R)-4'-phosphopantetheine + ATP + H(+) = 3'-dephospho-CoA + diphosphate</text>
        <dbReference type="Rhea" id="RHEA:19801"/>
        <dbReference type="ChEBI" id="CHEBI:15378"/>
        <dbReference type="ChEBI" id="CHEBI:30616"/>
        <dbReference type="ChEBI" id="CHEBI:33019"/>
        <dbReference type="ChEBI" id="CHEBI:57328"/>
        <dbReference type="ChEBI" id="CHEBI:61723"/>
        <dbReference type="EC" id="2.7.7.3"/>
    </reaction>
</comment>
<comment type="cofactor">
    <cofactor evidence="1">
        <name>Mg(2+)</name>
        <dbReference type="ChEBI" id="CHEBI:18420"/>
    </cofactor>
</comment>
<comment type="pathway">
    <text evidence="1">Cofactor biosynthesis; coenzyme A biosynthesis; CoA from (R)-pantothenate: step 4/5.</text>
</comment>
<comment type="subunit">
    <text evidence="1">Homohexamer.</text>
</comment>
<comment type="subcellular location">
    <subcellularLocation>
        <location evidence="1">Cytoplasm</location>
    </subcellularLocation>
</comment>
<comment type="similarity">
    <text evidence="1">Belongs to the bacterial CoaD family.</text>
</comment>
<keyword id="KW-0067">ATP-binding</keyword>
<keyword id="KW-0173">Coenzyme A biosynthesis</keyword>
<keyword id="KW-0963">Cytoplasm</keyword>
<keyword id="KW-0460">Magnesium</keyword>
<keyword id="KW-0547">Nucleotide-binding</keyword>
<keyword id="KW-0548">Nucleotidyltransferase</keyword>
<keyword id="KW-0808">Transferase</keyword>
<organism>
    <name type="scientific">Lactobacillus helveticus (strain DPC 4571)</name>
    <dbReference type="NCBI Taxonomy" id="405566"/>
    <lineage>
        <taxon>Bacteria</taxon>
        <taxon>Bacillati</taxon>
        <taxon>Bacillota</taxon>
        <taxon>Bacilli</taxon>
        <taxon>Lactobacillales</taxon>
        <taxon>Lactobacillaceae</taxon>
        <taxon>Lactobacillus</taxon>
    </lineage>
</organism>
<gene>
    <name evidence="1" type="primary">coaD</name>
    <name type="ordered locus">lhv_0886</name>
</gene>
<feature type="chain" id="PRO_1000071521" description="Phosphopantetheine adenylyltransferase">
    <location>
        <begin position="1"/>
        <end position="164"/>
    </location>
</feature>
<feature type="binding site" evidence="1">
    <location>
        <begin position="9"/>
        <end position="10"/>
    </location>
    <ligand>
        <name>ATP</name>
        <dbReference type="ChEBI" id="CHEBI:30616"/>
    </ligand>
</feature>
<feature type="binding site" evidence="1">
    <location>
        <position position="9"/>
    </location>
    <ligand>
        <name>substrate</name>
    </ligand>
</feature>
<feature type="binding site" evidence="1">
    <location>
        <position position="17"/>
    </location>
    <ligand>
        <name>ATP</name>
        <dbReference type="ChEBI" id="CHEBI:30616"/>
    </ligand>
</feature>
<feature type="binding site" evidence="1">
    <location>
        <position position="41"/>
    </location>
    <ligand>
        <name>substrate</name>
    </ligand>
</feature>
<feature type="binding site" evidence="1">
    <location>
        <position position="74"/>
    </location>
    <ligand>
        <name>substrate</name>
    </ligand>
</feature>
<feature type="binding site" evidence="1">
    <location>
        <position position="88"/>
    </location>
    <ligand>
        <name>substrate</name>
    </ligand>
</feature>
<feature type="binding site" evidence="1">
    <location>
        <begin position="89"/>
        <end position="91"/>
    </location>
    <ligand>
        <name>ATP</name>
        <dbReference type="ChEBI" id="CHEBI:30616"/>
    </ligand>
</feature>
<feature type="binding site" evidence="1">
    <location>
        <position position="99"/>
    </location>
    <ligand>
        <name>ATP</name>
        <dbReference type="ChEBI" id="CHEBI:30616"/>
    </ligand>
</feature>
<feature type="binding site" evidence="1">
    <location>
        <begin position="124"/>
        <end position="130"/>
    </location>
    <ligand>
        <name>ATP</name>
        <dbReference type="ChEBI" id="CHEBI:30616"/>
    </ligand>
</feature>
<feature type="site" description="Transition state stabilizer" evidence="1">
    <location>
        <position position="17"/>
    </location>
</feature>